<comment type="function">
    <text evidence="2">May play a role in the degradation of mRNAs, both in normal mRNA turnover and in nonsense-mediated mRNA decay. May remove the 7-methyl guanine cap structure from mRNA molecules, yielding a 5'-phosphorylated mRNA fragment and 7m-GDP (By similarity).</text>
</comment>
<comment type="catalytic activity">
    <reaction evidence="2">
        <text>a 5'-end (N(7)-methyl 5'-triphosphoguanosine)-ribonucleoside in mRNA + H2O = N(7)-methyl-GDP + a 5'-end phospho-ribonucleoside in mRNA + 2 H(+)</text>
        <dbReference type="Rhea" id="RHEA:67484"/>
        <dbReference type="Rhea" id="RHEA-COMP:15692"/>
        <dbReference type="Rhea" id="RHEA-COMP:17167"/>
        <dbReference type="ChEBI" id="CHEBI:15377"/>
        <dbReference type="ChEBI" id="CHEBI:15378"/>
        <dbReference type="ChEBI" id="CHEBI:63714"/>
        <dbReference type="ChEBI" id="CHEBI:138282"/>
        <dbReference type="ChEBI" id="CHEBI:156461"/>
        <dbReference type="EC" id="3.6.1.62"/>
    </reaction>
    <physiologicalReaction direction="left-to-right" evidence="2">
        <dbReference type="Rhea" id="RHEA:67485"/>
    </physiologicalReaction>
</comment>
<comment type="subunit">
    <text evidence="1">Interacts with DCP1A.</text>
</comment>
<comment type="subcellular location">
    <subcellularLocation>
        <location evidence="1">Cytoplasm</location>
    </subcellularLocation>
    <subcellularLocation>
        <location evidence="2">Nucleus</location>
    </subcellularLocation>
</comment>
<comment type="similarity">
    <text evidence="4">Belongs to the DCP1 family.</text>
</comment>
<gene>
    <name type="primary">DCP1B</name>
</gene>
<keyword id="KW-0007">Acetylation</keyword>
<keyword id="KW-0963">Cytoplasm</keyword>
<keyword id="KW-0378">Hydrolase</keyword>
<keyword id="KW-0866">Nonsense-mediated mRNA decay</keyword>
<keyword id="KW-0539">Nucleus</keyword>
<keyword id="KW-0597">Phosphoprotein</keyword>
<keyword id="KW-1185">Reference proteome</keyword>
<name>DCP1B_PONAB</name>
<proteinExistence type="evidence at transcript level"/>
<sequence length="609" mass="66899">MAAVAAGGLVGKGRDISLAALQRHDPYINRIVDVASQVALYTFGHRANEWEKTDVEGTLFVYTRSASPKHGFTIMNRLSMENRTEPITKDLDFQLQDPFLLYRNARLSIYGIWFYDKEECQRIAELMKNLTQYEQLKAHQGTGAGISPMILNSGEGKEVDILRMLIKAKDEYTKCKTCSEPKKITSSSAIYDNPNLIKPIPVKPSENQQQRIPQPNQTLDPEPQHLSLTALFGKQDKATCQETVEPPQTLHQQQQQQQEKLPIRQGVVRSLSYEEPRRHSPPIEKQLCPAIQKLMVRSADLHPLSELPENRPCENGSTHSAGEFFTGPVRPGSPHNIGTSRGVQNASRTQNLFEKLQSTPGAANKCDPSTPAPASSAALNRSRAPTSVTPQAPGKGLAQPPQAYFNGSLPPQAHGREQSTLPRQTLPISGNQTGSSGVISPQELLKKLQIVQQEQQLHASNRPALAAKFPVLSQSSGTGKPLESWINKTSSTEQQTPLFQVISPQRIPATAAPSLLTSPMVFAQPTSVPPKERESGLLPVGGQEPPAAATSLLLPIQSPEPSMITSSPLTKLQLQEALLYLIQNDDNFLNIIYEAYLFSMTQAAMKKSM</sequence>
<reference key="1">
    <citation type="submission" date="2004-11" db="EMBL/GenBank/DDBJ databases">
        <authorList>
            <consortium name="The German cDNA consortium"/>
        </authorList>
    </citation>
    <scope>NUCLEOTIDE SEQUENCE [LARGE SCALE MRNA]</scope>
    <source>
        <tissue>Brain cortex</tissue>
    </source>
</reference>
<organism>
    <name type="scientific">Pongo abelii</name>
    <name type="common">Sumatran orangutan</name>
    <name type="synonym">Pongo pygmaeus abelii</name>
    <dbReference type="NCBI Taxonomy" id="9601"/>
    <lineage>
        <taxon>Eukaryota</taxon>
        <taxon>Metazoa</taxon>
        <taxon>Chordata</taxon>
        <taxon>Craniata</taxon>
        <taxon>Vertebrata</taxon>
        <taxon>Euteleostomi</taxon>
        <taxon>Mammalia</taxon>
        <taxon>Eutheria</taxon>
        <taxon>Euarchontoglires</taxon>
        <taxon>Primates</taxon>
        <taxon>Haplorrhini</taxon>
        <taxon>Catarrhini</taxon>
        <taxon>Hominidae</taxon>
        <taxon>Pongo</taxon>
    </lineage>
</organism>
<dbReference type="EC" id="3.6.1.62" evidence="2"/>
<dbReference type="EMBL" id="CR861447">
    <property type="protein sequence ID" value="CAH93503.1"/>
    <property type="molecule type" value="mRNA"/>
</dbReference>
<dbReference type="RefSeq" id="NP_001127672.1">
    <property type="nucleotide sequence ID" value="NM_001134200.1"/>
</dbReference>
<dbReference type="SMR" id="Q5R413"/>
<dbReference type="FunCoup" id="Q5R413">
    <property type="interactions" value="2070"/>
</dbReference>
<dbReference type="STRING" id="9601.ENSPPYP00000004723"/>
<dbReference type="GeneID" id="100174754"/>
<dbReference type="KEGG" id="pon:100174754"/>
<dbReference type="CTD" id="196513"/>
<dbReference type="eggNOG" id="KOG2868">
    <property type="taxonomic scope" value="Eukaryota"/>
</dbReference>
<dbReference type="InParanoid" id="Q5R413"/>
<dbReference type="OrthoDB" id="440673at2759"/>
<dbReference type="Proteomes" id="UP000001595">
    <property type="component" value="Unplaced"/>
</dbReference>
<dbReference type="GO" id="GO:0005634">
    <property type="term" value="C:nucleus"/>
    <property type="evidence" value="ECO:0007669"/>
    <property type="project" value="UniProtKB-SubCell"/>
</dbReference>
<dbReference type="GO" id="GO:0000932">
    <property type="term" value="C:P-body"/>
    <property type="evidence" value="ECO:0007669"/>
    <property type="project" value="TreeGrafter"/>
</dbReference>
<dbReference type="GO" id="GO:0140933">
    <property type="term" value="F:5'-(N(7)-methylguanosine 5'-triphospho)-[mRNA] hydrolase activity"/>
    <property type="evidence" value="ECO:0007669"/>
    <property type="project" value="RHEA"/>
</dbReference>
<dbReference type="GO" id="GO:0008047">
    <property type="term" value="F:enzyme activator activity"/>
    <property type="evidence" value="ECO:0007669"/>
    <property type="project" value="InterPro"/>
</dbReference>
<dbReference type="GO" id="GO:0003729">
    <property type="term" value="F:mRNA binding"/>
    <property type="evidence" value="ECO:0007669"/>
    <property type="project" value="TreeGrafter"/>
</dbReference>
<dbReference type="GO" id="GO:0000290">
    <property type="term" value="P:deadenylation-dependent decapping of nuclear-transcribed mRNA"/>
    <property type="evidence" value="ECO:0007669"/>
    <property type="project" value="InterPro"/>
</dbReference>
<dbReference type="GO" id="GO:0031087">
    <property type="term" value="P:deadenylation-independent decapping of nuclear-transcribed mRNA"/>
    <property type="evidence" value="ECO:0007669"/>
    <property type="project" value="TreeGrafter"/>
</dbReference>
<dbReference type="GO" id="GO:0000184">
    <property type="term" value="P:nuclear-transcribed mRNA catabolic process, nonsense-mediated decay"/>
    <property type="evidence" value="ECO:0007669"/>
    <property type="project" value="UniProtKB-KW"/>
</dbReference>
<dbReference type="CDD" id="cd09804">
    <property type="entry name" value="Dcp1"/>
    <property type="match status" value="1"/>
</dbReference>
<dbReference type="FunFam" id="2.30.29.30:FF:000097">
    <property type="entry name" value="Putative mRNA-decapping enzyme 1A"/>
    <property type="match status" value="1"/>
</dbReference>
<dbReference type="Gene3D" id="6.10.140.2030">
    <property type="match status" value="1"/>
</dbReference>
<dbReference type="Gene3D" id="2.30.29.30">
    <property type="entry name" value="Pleckstrin-homology domain (PH domain)/Phosphotyrosine-binding domain (PTB)"/>
    <property type="match status" value="1"/>
</dbReference>
<dbReference type="InterPro" id="IPR010334">
    <property type="entry name" value="Dcp1"/>
</dbReference>
<dbReference type="InterPro" id="IPR031953">
    <property type="entry name" value="mRNA_decap_C"/>
</dbReference>
<dbReference type="InterPro" id="IPR011993">
    <property type="entry name" value="PH-like_dom_sf"/>
</dbReference>
<dbReference type="PANTHER" id="PTHR16290:SF5">
    <property type="entry name" value="MRNA-DECAPPING ENZYME 1B"/>
    <property type="match status" value="1"/>
</dbReference>
<dbReference type="PANTHER" id="PTHR16290">
    <property type="entry name" value="TRANSCRIPTION FACTOR SMIF DECAPPING ENZYME DCP1"/>
    <property type="match status" value="1"/>
</dbReference>
<dbReference type="Pfam" id="PF06058">
    <property type="entry name" value="DCP1"/>
    <property type="match status" value="1"/>
</dbReference>
<dbReference type="Pfam" id="PF16741">
    <property type="entry name" value="mRNA_decap_C"/>
    <property type="match status" value="1"/>
</dbReference>
<dbReference type="SUPFAM" id="SSF50729">
    <property type="entry name" value="PH domain-like"/>
    <property type="match status" value="1"/>
</dbReference>
<protein>
    <recommendedName>
        <fullName>mRNA-decapping enzyme 1B</fullName>
        <ecNumber evidence="2">3.6.1.62</ecNumber>
    </recommendedName>
</protein>
<evidence type="ECO:0000250" key="1">
    <source>
        <dbReference type="UniProtKB" id="Q8IZD4"/>
    </source>
</evidence>
<evidence type="ECO:0000250" key="2">
    <source>
        <dbReference type="UniProtKB" id="Q9NPI6"/>
    </source>
</evidence>
<evidence type="ECO:0000256" key="3">
    <source>
        <dbReference type="SAM" id="MobiDB-lite"/>
    </source>
</evidence>
<evidence type="ECO:0000305" key="4"/>
<accession>Q5R413</accession>
<feature type="initiator methionine" description="Removed" evidence="1">
    <location>
        <position position="1"/>
    </location>
</feature>
<feature type="chain" id="PRO_0000189635" description="mRNA-decapping enzyme 1B">
    <location>
        <begin position="2"/>
        <end position="609"/>
    </location>
</feature>
<feature type="region of interest" description="Disordered" evidence="3">
    <location>
        <begin position="201"/>
        <end position="222"/>
    </location>
</feature>
<feature type="region of interest" description="Disordered" evidence="3">
    <location>
        <begin position="243"/>
        <end position="264"/>
    </location>
</feature>
<feature type="region of interest" description="Disordered" evidence="3">
    <location>
        <begin position="326"/>
        <end position="345"/>
    </location>
</feature>
<feature type="region of interest" description="Disordered" evidence="3">
    <location>
        <begin position="359"/>
        <end position="438"/>
    </location>
</feature>
<feature type="compositionally biased region" description="Polar residues" evidence="3">
    <location>
        <begin position="205"/>
        <end position="219"/>
    </location>
</feature>
<feature type="compositionally biased region" description="Polar residues" evidence="3">
    <location>
        <begin position="336"/>
        <end position="345"/>
    </location>
</feature>
<feature type="compositionally biased region" description="Low complexity" evidence="3">
    <location>
        <begin position="368"/>
        <end position="378"/>
    </location>
</feature>
<feature type="compositionally biased region" description="Polar residues" evidence="3">
    <location>
        <begin position="418"/>
        <end position="438"/>
    </location>
</feature>
<feature type="modified residue" description="N-acetylalanine" evidence="1">
    <location>
        <position position="2"/>
    </location>
</feature>
<feature type="modified residue" description="Phosphoserine" evidence="1">
    <location>
        <position position="147"/>
    </location>
</feature>
<feature type="modified residue" description="Phosphotyrosine" evidence="1">
    <location>
        <position position="191"/>
    </location>
</feature>
<feature type="modified residue" description="Phosphoserine" evidence="1">
    <location>
        <position position="272"/>
    </location>
</feature>
<feature type="modified residue" description="Phosphoserine" evidence="1">
    <location>
        <position position="333"/>
    </location>
</feature>
<feature type="modified residue" description="Phosphothreonine" evidence="1">
    <location>
        <position position="389"/>
    </location>
</feature>
<feature type="modified residue" description="Phosphoserine" evidence="1">
    <location>
        <position position="440"/>
    </location>
</feature>
<feature type="modified residue" description="Phosphoserine" evidence="1">
    <location>
        <position position="503"/>
    </location>
</feature>